<proteinExistence type="inferred from homology"/>
<evidence type="ECO:0000255" key="1">
    <source>
        <dbReference type="HAMAP-Rule" id="MF_00151"/>
    </source>
</evidence>
<name>COAD_HALHL</name>
<accession>A1WZG0</accession>
<dbReference type="EC" id="2.7.7.3" evidence="1"/>
<dbReference type="EMBL" id="CP000544">
    <property type="protein sequence ID" value="ABM63072.1"/>
    <property type="molecule type" value="Genomic_DNA"/>
</dbReference>
<dbReference type="RefSeq" id="WP_011815094.1">
    <property type="nucleotide sequence ID" value="NC_008789.1"/>
</dbReference>
<dbReference type="SMR" id="A1WZG0"/>
<dbReference type="STRING" id="349124.Hhal_2309"/>
<dbReference type="KEGG" id="hha:Hhal_2309"/>
<dbReference type="eggNOG" id="COG0669">
    <property type="taxonomic scope" value="Bacteria"/>
</dbReference>
<dbReference type="HOGENOM" id="CLU_100149_0_1_6"/>
<dbReference type="OrthoDB" id="9806661at2"/>
<dbReference type="UniPathway" id="UPA00241">
    <property type="reaction ID" value="UER00355"/>
</dbReference>
<dbReference type="Proteomes" id="UP000000647">
    <property type="component" value="Chromosome"/>
</dbReference>
<dbReference type="GO" id="GO:0005737">
    <property type="term" value="C:cytoplasm"/>
    <property type="evidence" value="ECO:0007669"/>
    <property type="project" value="UniProtKB-SubCell"/>
</dbReference>
<dbReference type="GO" id="GO:0005524">
    <property type="term" value="F:ATP binding"/>
    <property type="evidence" value="ECO:0007669"/>
    <property type="project" value="UniProtKB-KW"/>
</dbReference>
<dbReference type="GO" id="GO:0004595">
    <property type="term" value="F:pantetheine-phosphate adenylyltransferase activity"/>
    <property type="evidence" value="ECO:0007669"/>
    <property type="project" value="UniProtKB-UniRule"/>
</dbReference>
<dbReference type="GO" id="GO:0015937">
    <property type="term" value="P:coenzyme A biosynthetic process"/>
    <property type="evidence" value="ECO:0007669"/>
    <property type="project" value="UniProtKB-UniRule"/>
</dbReference>
<dbReference type="CDD" id="cd02163">
    <property type="entry name" value="PPAT"/>
    <property type="match status" value="1"/>
</dbReference>
<dbReference type="Gene3D" id="3.40.50.620">
    <property type="entry name" value="HUPs"/>
    <property type="match status" value="1"/>
</dbReference>
<dbReference type="HAMAP" id="MF_00151">
    <property type="entry name" value="PPAT_bact"/>
    <property type="match status" value="1"/>
</dbReference>
<dbReference type="InterPro" id="IPR004821">
    <property type="entry name" value="Cyt_trans-like"/>
</dbReference>
<dbReference type="InterPro" id="IPR001980">
    <property type="entry name" value="PPAT"/>
</dbReference>
<dbReference type="InterPro" id="IPR014729">
    <property type="entry name" value="Rossmann-like_a/b/a_fold"/>
</dbReference>
<dbReference type="NCBIfam" id="TIGR01510">
    <property type="entry name" value="coaD_prev_kdtB"/>
    <property type="match status" value="1"/>
</dbReference>
<dbReference type="NCBIfam" id="TIGR00125">
    <property type="entry name" value="cyt_tran_rel"/>
    <property type="match status" value="1"/>
</dbReference>
<dbReference type="PANTHER" id="PTHR21342">
    <property type="entry name" value="PHOSPHOPANTETHEINE ADENYLYLTRANSFERASE"/>
    <property type="match status" value="1"/>
</dbReference>
<dbReference type="PANTHER" id="PTHR21342:SF1">
    <property type="entry name" value="PHOSPHOPANTETHEINE ADENYLYLTRANSFERASE"/>
    <property type="match status" value="1"/>
</dbReference>
<dbReference type="Pfam" id="PF01467">
    <property type="entry name" value="CTP_transf_like"/>
    <property type="match status" value="1"/>
</dbReference>
<dbReference type="PRINTS" id="PR01020">
    <property type="entry name" value="LPSBIOSNTHSS"/>
</dbReference>
<dbReference type="SUPFAM" id="SSF52374">
    <property type="entry name" value="Nucleotidylyl transferase"/>
    <property type="match status" value="1"/>
</dbReference>
<comment type="function">
    <text evidence="1">Reversibly transfers an adenylyl group from ATP to 4'-phosphopantetheine, yielding dephospho-CoA (dPCoA) and pyrophosphate.</text>
</comment>
<comment type="catalytic activity">
    <reaction evidence="1">
        <text>(R)-4'-phosphopantetheine + ATP + H(+) = 3'-dephospho-CoA + diphosphate</text>
        <dbReference type="Rhea" id="RHEA:19801"/>
        <dbReference type="ChEBI" id="CHEBI:15378"/>
        <dbReference type="ChEBI" id="CHEBI:30616"/>
        <dbReference type="ChEBI" id="CHEBI:33019"/>
        <dbReference type="ChEBI" id="CHEBI:57328"/>
        <dbReference type="ChEBI" id="CHEBI:61723"/>
        <dbReference type="EC" id="2.7.7.3"/>
    </reaction>
</comment>
<comment type="cofactor">
    <cofactor evidence="1">
        <name>Mg(2+)</name>
        <dbReference type="ChEBI" id="CHEBI:18420"/>
    </cofactor>
</comment>
<comment type="pathway">
    <text evidence="1">Cofactor biosynthesis; coenzyme A biosynthesis; CoA from (R)-pantothenate: step 4/5.</text>
</comment>
<comment type="subunit">
    <text evidence="1">Homohexamer.</text>
</comment>
<comment type="subcellular location">
    <subcellularLocation>
        <location evidence="1">Cytoplasm</location>
    </subcellularLocation>
</comment>
<comment type="similarity">
    <text evidence="1">Belongs to the bacterial CoaD family.</text>
</comment>
<keyword id="KW-0067">ATP-binding</keyword>
<keyword id="KW-0173">Coenzyme A biosynthesis</keyword>
<keyword id="KW-0963">Cytoplasm</keyword>
<keyword id="KW-0460">Magnesium</keyword>
<keyword id="KW-0547">Nucleotide-binding</keyword>
<keyword id="KW-0548">Nucleotidyltransferase</keyword>
<keyword id="KW-1185">Reference proteome</keyword>
<keyword id="KW-0808">Transferase</keyword>
<organism>
    <name type="scientific">Halorhodospira halophila (strain DSM 244 / SL1)</name>
    <name type="common">Ectothiorhodospira halophila (strain DSM 244 / SL1)</name>
    <dbReference type="NCBI Taxonomy" id="349124"/>
    <lineage>
        <taxon>Bacteria</taxon>
        <taxon>Pseudomonadati</taxon>
        <taxon>Pseudomonadota</taxon>
        <taxon>Gammaproteobacteria</taxon>
        <taxon>Chromatiales</taxon>
        <taxon>Ectothiorhodospiraceae</taxon>
        <taxon>Halorhodospira</taxon>
    </lineage>
</organism>
<sequence>MGVTAIYPGTFDPITHGHTDLIQRGARLFDRLIVGVAANPSPSKAPAFAVEERLELARTALAGIDNVEVEAFTSLLVDFVAHHEAQVIVRGLRAVSDFEYEFQLASMNRQLRADVETVFLTPAEQYAFISSSLVREVAALGGDVSRFVHPAVAEALRNRVRRVP</sequence>
<gene>
    <name evidence="1" type="primary">coaD</name>
    <name type="ordered locus">Hhal_2309</name>
</gene>
<protein>
    <recommendedName>
        <fullName evidence="1">Phosphopantetheine adenylyltransferase</fullName>
        <ecNumber evidence="1">2.7.7.3</ecNumber>
    </recommendedName>
    <alternativeName>
        <fullName evidence="1">Dephospho-CoA pyrophosphorylase</fullName>
    </alternativeName>
    <alternativeName>
        <fullName evidence="1">Pantetheine-phosphate adenylyltransferase</fullName>
        <shortName evidence="1">PPAT</shortName>
    </alternativeName>
</protein>
<feature type="chain" id="PRO_1000096798" description="Phosphopantetheine adenylyltransferase">
    <location>
        <begin position="1"/>
        <end position="164"/>
    </location>
</feature>
<feature type="binding site" evidence="1">
    <location>
        <begin position="10"/>
        <end position="11"/>
    </location>
    <ligand>
        <name>ATP</name>
        <dbReference type="ChEBI" id="CHEBI:30616"/>
    </ligand>
</feature>
<feature type="binding site" evidence="1">
    <location>
        <position position="10"/>
    </location>
    <ligand>
        <name>substrate</name>
    </ligand>
</feature>
<feature type="binding site" evidence="1">
    <location>
        <position position="18"/>
    </location>
    <ligand>
        <name>ATP</name>
        <dbReference type="ChEBI" id="CHEBI:30616"/>
    </ligand>
</feature>
<feature type="binding site" evidence="1">
    <location>
        <position position="44"/>
    </location>
    <ligand>
        <name>substrate</name>
    </ligand>
</feature>
<feature type="binding site" evidence="1">
    <location>
        <position position="76"/>
    </location>
    <ligand>
        <name>substrate</name>
    </ligand>
</feature>
<feature type="binding site" evidence="1">
    <location>
        <position position="90"/>
    </location>
    <ligand>
        <name>substrate</name>
    </ligand>
</feature>
<feature type="binding site" evidence="1">
    <location>
        <begin position="91"/>
        <end position="93"/>
    </location>
    <ligand>
        <name>ATP</name>
        <dbReference type="ChEBI" id="CHEBI:30616"/>
    </ligand>
</feature>
<feature type="binding site" evidence="1">
    <location>
        <position position="101"/>
    </location>
    <ligand>
        <name>ATP</name>
        <dbReference type="ChEBI" id="CHEBI:30616"/>
    </ligand>
</feature>
<feature type="binding site" evidence="1">
    <location>
        <begin position="126"/>
        <end position="132"/>
    </location>
    <ligand>
        <name>ATP</name>
        <dbReference type="ChEBI" id="CHEBI:30616"/>
    </ligand>
</feature>
<feature type="site" description="Transition state stabilizer" evidence="1">
    <location>
        <position position="18"/>
    </location>
</feature>
<reference key="1">
    <citation type="submission" date="2006-12" db="EMBL/GenBank/DDBJ databases">
        <title>Complete sequence of Halorhodospira halophila SL1.</title>
        <authorList>
            <consortium name="US DOE Joint Genome Institute"/>
            <person name="Copeland A."/>
            <person name="Lucas S."/>
            <person name="Lapidus A."/>
            <person name="Barry K."/>
            <person name="Detter J.C."/>
            <person name="Glavina del Rio T."/>
            <person name="Hammon N."/>
            <person name="Israni S."/>
            <person name="Dalin E."/>
            <person name="Tice H."/>
            <person name="Pitluck S."/>
            <person name="Saunders E."/>
            <person name="Brettin T."/>
            <person name="Bruce D."/>
            <person name="Han C."/>
            <person name="Tapia R."/>
            <person name="Schmutz J."/>
            <person name="Larimer F."/>
            <person name="Land M."/>
            <person name="Hauser L."/>
            <person name="Kyrpides N."/>
            <person name="Mikhailova N."/>
            <person name="Hoff W."/>
            <person name="Richardson P."/>
        </authorList>
    </citation>
    <scope>NUCLEOTIDE SEQUENCE [LARGE SCALE GENOMIC DNA]</scope>
    <source>
        <strain>DSM 244 / SL1</strain>
    </source>
</reference>